<protein>
    <recommendedName>
        <fullName evidence="1">Demethylmenaquinone methyltransferase</fullName>
        <ecNumber evidence="1">2.1.1.163</ecNumber>
    </recommendedName>
</protein>
<proteinExistence type="inferred from homology"/>
<dbReference type="EC" id="2.1.1.163" evidence="1"/>
<dbReference type="EMBL" id="CP000088">
    <property type="protein sequence ID" value="AAZ56730.1"/>
    <property type="molecule type" value="Genomic_DNA"/>
</dbReference>
<dbReference type="RefSeq" id="WP_011293120.1">
    <property type="nucleotide sequence ID" value="NC_007333.1"/>
</dbReference>
<dbReference type="SMR" id="Q47LE2"/>
<dbReference type="STRING" id="269800.Tfu_2697"/>
<dbReference type="KEGG" id="tfu:Tfu_2697"/>
<dbReference type="eggNOG" id="COG2226">
    <property type="taxonomic scope" value="Bacteria"/>
</dbReference>
<dbReference type="HOGENOM" id="CLU_037990_0_0_11"/>
<dbReference type="OrthoDB" id="9808140at2"/>
<dbReference type="UniPathway" id="UPA00079">
    <property type="reaction ID" value="UER00169"/>
</dbReference>
<dbReference type="GO" id="GO:0043770">
    <property type="term" value="F:demethylmenaquinone methyltransferase activity"/>
    <property type="evidence" value="ECO:0007669"/>
    <property type="project" value="UniProtKB-UniRule"/>
</dbReference>
<dbReference type="GO" id="GO:0009234">
    <property type="term" value="P:menaquinone biosynthetic process"/>
    <property type="evidence" value="ECO:0007669"/>
    <property type="project" value="UniProtKB-UniRule"/>
</dbReference>
<dbReference type="GO" id="GO:0032259">
    <property type="term" value="P:methylation"/>
    <property type="evidence" value="ECO:0007669"/>
    <property type="project" value="UniProtKB-KW"/>
</dbReference>
<dbReference type="CDD" id="cd02440">
    <property type="entry name" value="AdoMet_MTases"/>
    <property type="match status" value="1"/>
</dbReference>
<dbReference type="Gene3D" id="3.40.50.150">
    <property type="entry name" value="Vaccinia Virus protein VP39"/>
    <property type="match status" value="1"/>
</dbReference>
<dbReference type="HAMAP" id="MF_01813">
    <property type="entry name" value="MenG_UbiE_methyltr"/>
    <property type="match status" value="1"/>
</dbReference>
<dbReference type="InterPro" id="IPR029063">
    <property type="entry name" value="SAM-dependent_MTases_sf"/>
</dbReference>
<dbReference type="InterPro" id="IPR004033">
    <property type="entry name" value="UbiE/COQ5_MeTrFase"/>
</dbReference>
<dbReference type="InterPro" id="IPR023576">
    <property type="entry name" value="UbiE/COQ5_MeTrFase_CS"/>
</dbReference>
<dbReference type="NCBIfam" id="TIGR01934">
    <property type="entry name" value="MenG_MenH_UbiE"/>
    <property type="match status" value="1"/>
</dbReference>
<dbReference type="NCBIfam" id="NF001241">
    <property type="entry name" value="PRK00216.1-2"/>
    <property type="match status" value="1"/>
</dbReference>
<dbReference type="PANTHER" id="PTHR43591:SF24">
    <property type="entry name" value="2-METHOXY-6-POLYPRENYL-1,4-BENZOQUINOL METHYLASE, MITOCHONDRIAL"/>
    <property type="match status" value="1"/>
</dbReference>
<dbReference type="PANTHER" id="PTHR43591">
    <property type="entry name" value="METHYLTRANSFERASE"/>
    <property type="match status" value="1"/>
</dbReference>
<dbReference type="Pfam" id="PF01209">
    <property type="entry name" value="Ubie_methyltran"/>
    <property type="match status" value="1"/>
</dbReference>
<dbReference type="SUPFAM" id="SSF53335">
    <property type="entry name" value="S-adenosyl-L-methionine-dependent methyltransferases"/>
    <property type="match status" value="1"/>
</dbReference>
<dbReference type="PROSITE" id="PS51608">
    <property type="entry name" value="SAM_MT_UBIE"/>
    <property type="match status" value="1"/>
</dbReference>
<dbReference type="PROSITE" id="PS01184">
    <property type="entry name" value="UBIE_2"/>
    <property type="match status" value="1"/>
</dbReference>
<keyword id="KW-0474">Menaquinone biosynthesis</keyword>
<keyword id="KW-0489">Methyltransferase</keyword>
<keyword id="KW-0949">S-adenosyl-L-methionine</keyword>
<keyword id="KW-0808">Transferase</keyword>
<organism>
    <name type="scientific">Thermobifida fusca (strain YX)</name>
    <dbReference type="NCBI Taxonomy" id="269800"/>
    <lineage>
        <taxon>Bacteria</taxon>
        <taxon>Bacillati</taxon>
        <taxon>Actinomycetota</taxon>
        <taxon>Actinomycetes</taxon>
        <taxon>Streptosporangiales</taxon>
        <taxon>Nocardiopsidaceae</taxon>
        <taxon>Thermobifida</taxon>
    </lineage>
</organism>
<gene>
    <name evidence="1" type="primary">menG</name>
    <name type="ordered locus">Tfu_2697</name>
</gene>
<comment type="function">
    <text evidence="1">Methyltransferase required for the conversion of demethylmenaquinol (DMKH2) to menaquinol (MKH2).</text>
</comment>
<comment type="catalytic activity">
    <reaction evidence="1">
        <text>a 2-demethylmenaquinol + S-adenosyl-L-methionine = a menaquinol + S-adenosyl-L-homocysteine + H(+)</text>
        <dbReference type="Rhea" id="RHEA:42640"/>
        <dbReference type="Rhea" id="RHEA-COMP:9539"/>
        <dbReference type="Rhea" id="RHEA-COMP:9563"/>
        <dbReference type="ChEBI" id="CHEBI:15378"/>
        <dbReference type="ChEBI" id="CHEBI:18151"/>
        <dbReference type="ChEBI" id="CHEBI:55437"/>
        <dbReference type="ChEBI" id="CHEBI:57856"/>
        <dbReference type="ChEBI" id="CHEBI:59789"/>
        <dbReference type="EC" id="2.1.1.163"/>
    </reaction>
</comment>
<comment type="pathway">
    <text evidence="1">Quinol/quinone metabolism; menaquinone biosynthesis; menaquinol from 1,4-dihydroxy-2-naphthoate: step 2/2.</text>
</comment>
<comment type="similarity">
    <text evidence="1">Belongs to the class I-like SAM-binding methyltransferase superfamily. MenG/UbiE family.</text>
</comment>
<feature type="chain" id="PRO_1000056311" description="Demethylmenaquinone methyltransferase">
    <location>
        <begin position="1"/>
        <end position="236"/>
    </location>
</feature>
<feature type="binding site" evidence="1">
    <location>
        <position position="62"/>
    </location>
    <ligand>
        <name>S-adenosyl-L-methionine</name>
        <dbReference type="ChEBI" id="CHEBI:59789"/>
    </ligand>
</feature>
<feature type="binding site" evidence="1">
    <location>
        <position position="80"/>
    </location>
    <ligand>
        <name>S-adenosyl-L-methionine</name>
        <dbReference type="ChEBI" id="CHEBI:59789"/>
    </ligand>
</feature>
<feature type="binding site" evidence="1">
    <location>
        <begin position="107"/>
        <end position="108"/>
    </location>
    <ligand>
        <name>S-adenosyl-L-methionine</name>
        <dbReference type="ChEBI" id="CHEBI:59789"/>
    </ligand>
</feature>
<feature type="binding site" evidence="1">
    <location>
        <position position="124"/>
    </location>
    <ligand>
        <name>S-adenosyl-L-methionine</name>
        <dbReference type="ChEBI" id="CHEBI:59789"/>
    </ligand>
</feature>
<name>MENG_THEFY</name>
<evidence type="ECO:0000255" key="1">
    <source>
        <dbReference type="HAMAP-Rule" id="MF_01813"/>
    </source>
</evidence>
<reference key="1">
    <citation type="journal article" date="2007" name="J. Bacteriol.">
        <title>Genome sequence and analysis of the soil cellulolytic actinomycete Thermobifida fusca YX.</title>
        <authorList>
            <person name="Lykidis A."/>
            <person name="Mavromatis K."/>
            <person name="Ivanova N."/>
            <person name="Anderson I."/>
            <person name="Land M."/>
            <person name="DiBartolo G."/>
            <person name="Martinez M."/>
            <person name="Lapidus A."/>
            <person name="Lucas S."/>
            <person name="Copeland A."/>
            <person name="Richardson P."/>
            <person name="Wilson D.B."/>
            <person name="Kyrpides N."/>
        </authorList>
    </citation>
    <scope>NUCLEOTIDE SEQUENCE [LARGE SCALE GENOMIC DNA]</scope>
    <source>
        <strain>YX</strain>
    </source>
</reference>
<accession>Q47LE2</accession>
<sequence length="236" mass="26044">MIRAELDKDPRDVAAMFDSIADRYDLLNRVLSLGRERYWRQATVAAVDAYSGELVLDLAAGTGTSSESFTRRGARVIACDFSFGMLRVGAERRGGASRKGVTVVAGDALHLPFADQTFDAVTISFGLRNVHDVDRALAELLRVTKVGGRLVICEFSHLPVQPLDRMLGWGMKIGLPWVARQFSDNPDAYAYLSESIAAWPDQAGLARKISAAGWSRVAWRNLTFGVVALHRAYRER</sequence>